<sequence length="827" mass="93724">MTFCYPCRAFALLTRGFTSFMSGWPRIYYKLLNLPLSILVKSKSIPADPAPELGLDTSRPIMYVLPYNSKADLLTLRAQCLAHDLPDPLEPLEIDGTLLPRYVFIHGGPRVFTYYTPKEESIKLFHDYLDLHRSNPNLDVQMVPVSVMFGRAPGREKGEVNPPLRMLNGVQKFFAVLWLGRDSFVRFSPSVSLRRMADEHGTDKTIAQKLARVARMHFARQRLAAVGPRLPARQDLFNKLLASRAIAKAVEDEARSKKISHEKAQQNAIVLMEEIAANFSYEMIRLTDRILGFTWNRLYQGINVHNAERVRQLAHDGHELVYVPCHRSHMDYLLLSYVLYHQGLVPPHIAAGINLNFWPAGPIFRRLGAFFIRRTFKGNKLYSTVFREYLGELFSRGYSVEYFVEGGRSRTGRLLDPKTGTLSMTIQAMLRGGTRPITLIPIYIGYEHVMEVGTYAKELRGATKEKESLPQMLRGLSKLRNLGQGYVNFGEPMPLMTYLNQHVPDWRESIDPIEAVRPAWLTPTVNNIAADLMVRINNAGAANAMNLCCTALLASRQRSLTREQLTEQLNCYLDLMRNVPYSTDSTVPSASASELIDHALQMNKFEVEKDTIGDIIILPREQAVLMTYYRNNIAHMLVLPSLMAAIVTQHRHISRDVLMEHVNVLYPMLKAELFLRWDRDELPDVIDALANEMQRQGLITLQDDELHINPAHSRTLQLLAAGARETLQRYAITFWLLSANPSINRGTLEKESRTVAQRLSVLHGINAPEFFDKAVFSSLVLTLRDEGYISDSGDAEPAETMKVYQLLAELITSDVRLTIESATQGEG</sequence>
<evidence type="ECO:0000255" key="1">
    <source>
        <dbReference type="HAMAP-Rule" id="MF_00393"/>
    </source>
</evidence>
<organism>
    <name type="scientific">Escherichia coli (strain SMS-3-5 / SECEC)</name>
    <dbReference type="NCBI Taxonomy" id="439855"/>
    <lineage>
        <taxon>Bacteria</taxon>
        <taxon>Pseudomonadati</taxon>
        <taxon>Pseudomonadota</taxon>
        <taxon>Gammaproteobacteria</taxon>
        <taxon>Enterobacterales</taxon>
        <taxon>Enterobacteriaceae</taxon>
        <taxon>Escherichia</taxon>
    </lineage>
</organism>
<dbReference type="EC" id="2.3.1.15" evidence="1"/>
<dbReference type="EMBL" id="CP000970">
    <property type="protein sequence ID" value="ACB18864.1"/>
    <property type="molecule type" value="Genomic_DNA"/>
</dbReference>
<dbReference type="SMR" id="B1LPK6"/>
<dbReference type="KEGG" id="ecm:EcSMS35_4503"/>
<dbReference type="HOGENOM" id="CLU_015407_0_0_6"/>
<dbReference type="UniPathway" id="UPA00557">
    <property type="reaction ID" value="UER00612"/>
</dbReference>
<dbReference type="Proteomes" id="UP000007011">
    <property type="component" value="Chromosome"/>
</dbReference>
<dbReference type="GO" id="GO:0005886">
    <property type="term" value="C:plasma membrane"/>
    <property type="evidence" value="ECO:0007669"/>
    <property type="project" value="UniProtKB-SubCell"/>
</dbReference>
<dbReference type="GO" id="GO:0004366">
    <property type="term" value="F:glycerol-3-phosphate O-acyltransferase activity"/>
    <property type="evidence" value="ECO:0007669"/>
    <property type="project" value="UniProtKB-UniRule"/>
</dbReference>
<dbReference type="GO" id="GO:0016024">
    <property type="term" value="P:CDP-diacylglycerol biosynthetic process"/>
    <property type="evidence" value="ECO:0007669"/>
    <property type="project" value="UniProtKB-UniRule"/>
</dbReference>
<dbReference type="GO" id="GO:0006631">
    <property type="term" value="P:fatty acid metabolic process"/>
    <property type="evidence" value="ECO:0007669"/>
    <property type="project" value="TreeGrafter"/>
</dbReference>
<dbReference type="CDD" id="cd07993">
    <property type="entry name" value="LPLAT_DHAPAT-like"/>
    <property type="match status" value="1"/>
</dbReference>
<dbReference type="HAMAP" id="MF_00393">
    <property type="entry name" value="Glyc3P_acyltrans"/>
    <property type="match status" value="1"/>
</dbReference>
<dbReference type="InterPro" id="IPR022284">
    <property type="entry name" value="GPAT/DHAPAT"/>
</dbReference>
<dbReference type="InterPro" id="IPR045520">
    <property type="entry name" value="GPAT/DHAPAT_C"/>
</dbReference>
<dbReference type="InterPro" id="IPR041728">
    <property type="entry name" value="GPAT/DHAPAT_LPLAT"/>
</dbReference>
<dbReference type="InterPro" id="IPR028354">
    <property type="entry name" value="GPAT_PlsB"/>
</dbReference>
<dbReference type="InterPro" id="IPR002123">
    <property type="entry name" value="Plipid/glycerol_acylTrfase"/>
</dbReference>
<dbReference type="NCBIfam" id="TIGR03703">
    <property type="entry name" value="plsB"/>
    <property type="match status" value="1"/>
</dbReference>
<dbReference type="NCBIfam" id="NF003441">
    <property type="entry name" value="PRK04974.1"/>
    <property type="match status" value="1"/>
</dbReference>
<dbReference type="PANTHER" id="PTHR12563:SF17">
    <property type="entry name" value="DIHYDROXYACETONE PHOSPHATE ACYLTRANSFERASE"/>
    <property type="match status" value="1"/>
</dbReference>
<dbReference type="PANTHER" id="PTHR12563">
    <property type="entry name" value="GLYCEROL-3-PHOSPHATE ACYLTRANSFERASE"/>
    <property type="match status" value="1"/>
</dbReference>
<dbReference type="Pfam" id="PF01553">
    <property type="entry name" value="Acyltransferase"/>
    <property type="match status" value="1"/>
</dbReference>
<dbReference type="Pfam" id="PF19277">
    <property type="entry name" value="GPAT_C"/>
    <property type="match status" value="1"/>
</dbReference>
<dbReference type="PIRSF" id="PIRSF500064">
    <property type="entry name" value="GPAT"/>
    <property type="match status" value="1"/>
</dbReference>
<dbReference type="PIRSF" id="PIRSF000437">
    <property type="entry name" value="GPAT_DHAPAT"/>
    <property type="match status" value="1"/>
</dbReference>
<dbReference type="SMART" id="SM00563">
    <property type="entry name" value="PlsC"/>
    <property type="match status" value="1"/>
</dbReference>
<dbReference type="SUPFAM" id="SSF69593">
    <property type="entry name" value="Glycerol-3-phosphate (1)-acyltransferase"/>
    <property type="match status" value="1"/>
</dbReference>
<name>PLSB_ECOSM</name>
<reference key="1">
    <citation type="journal article" date="2008" name="J. Bacteriol.">
        <title>Insights into the environmental resistance gene pool from the genome sequence of the multidrug-resistant environmental isolate Escherichia coli SMS-3-5.</title>
        <authorList>
            <person name="Fricke W.F."/>
            <person name="Wright M.S."/>
            <person name="Lindell A.H."/>
            <person name="Harkins D.M."/>
            <person name="Baker-Austin C."/>
            <person name="Ravel J."/>
            <person name="Stepanauskas R."/>
        </authorList>
    </citation>
    <scope>NUCLEOTIDE SEQUENCE [LARGE SCALE GENOMIC DNA]</scope>
    <source>
        <strain>SMS-3-5 / SECEC</strain>
    </source>
</reference>
<protein>
    <recommendedName>
        <fullName evidence="1">Glycerol-3-phosphate acyltransferase</fullName>
        <shortName evidence="1">GPAT</shortName>
        <ecNumber evidence="1">2.3.1.15</ecNumber>
    </recommendedName>
</protein>
<feature type="chain" id="PRO_1000123082" description="Glycerol-3-phosphate acyltransferase">
    <location>
        <begin position="1"/>
        <end position="827"/>
    </location>
</feature>
<feature type="short sequence motif" description="HXXXXD motif">
    <location>
        <begin position="325"/>
        <end position="330"/>
    </location>
</feature>
<gene>
    <name evidence="1" type="primary">plsB</name>
    <name type="ordered locus">EcSMS35_4503</name>
</gene>
<comment type="catalytic activity">
    <reaction evidence="1">
        <text>sn-glycerol 3-phosphate + an acyl-CoA = a 1-acyl-sn-glycero-3-phosphate + CoA</text>
        <dbReference type="Rhea" id="RHEA:15325"/>
        <dbReference type="ChEBI" id="CHEBI:57287"/>
        <dbReference type="ChEBI" id="CHEBI:57597"/>
        <dbReference type="ChEBI" id="CHEBI:57970"/>
        <dbReference type="ChEBI" id="CHEBI:58342"/>
        <dbReference type="EC" id="2.3.1.15"/>
    </reaction>
</comment>
<comment type="pathway">
    <text evidence="1">Phospholipid metabolism; CDP-diacylglycerol biosynthesis; CDP-diacylglycerol from sn-glycerol 3-phosphate: step 1/3.</text>
</comment>
<comment type="subcellular location">
    <subcellularLocation>
        <location evidence="1">Cell inner membrane</location>
        <topology evidence="1">Peripheral membrane protein</topology>
        <orientation evidence="1">Cytoplasmic side</orientation>
    </subcellularLocation>
</comment>
<comment type="domain">
    <text evidence="1">The HXXXXD motif is essential for acyltransferase activity and may constitute the binding site for the phosphate moiety of the glycerol-3-phosphate.</text>
</comment>
<comment type="similarity">
    <text evidence="1">Belongs to the GPAT/DAPAT family.</text>
</comment>
<keyword id="KW-0012">Acyltransferase</keyword>
<keyword id="KW-0997">Cell inner membrane</keyword>
<keyword id="KW-1003">Cell membrane</keyword>
<keyword id="KW-0444">Lipid biosynthesis</keyword>
<keyword id="KW-0443">Lipid metabolism</keyword>
<keyword id="KW-0472">Membrane</keyword>
<keyword id="KW-0594">Phospholipid biosynthesis</keyword>
<keyword id="KW-1208">Phospholipid metabolism</keyword>
<keyword id="KW-0808">Transferase</keyword>
<proteinExistence type="inferred from homology"/>
<accession>B1LPK6</accession>